<feature type="chain" id="PRO_0000303152" description="Mediator of RNA polymerase II transcription subunit 10">
    <location>
        <begin position="1"/>
        <end position="135"/>
    </location>
</feature>
<comment type="function">
    <text evidence="1">Component of the Mediator complex, a coactivator involved in the regulated transcription of nearly all RNA polymerase II-dependent genes. Mediator functions as a bridge to convey information from gene-specific regulatory proteins to the basal RNA polymerase II transcription machinery. Mediator is recruited to promoters by direct interactions with regulatory proteins and serves as a scaffold for the assembly of a functional preinitiation complex with RNA polymerase II and the general transcription factors (By similarity).</text>
</comment>
<comment type="subunit">
    <text evidence="1">Component of the Mediator complex, which is composed of MED1, MED4, MED6, MED7, MED8, MED9, MED10, MED11, MED12, MED13, MED13L, MED14, MED15, MED16, MED17, MED18, MED19, MED20, MED21, MED22, MED23, MED24, MED25, MED26, MED27, MED29, MED30, MED31, CCNC, CDK8 and CDC2L6/CDK11. The MED12, MED13, CCNC and CDK8 subunits form a distinct module termed the CDK8 module. Mediator containing the CDK8 module is less active than Mediator lacking this module in supporting transcriptional activation. Individual preparations of the Mediator complex lacking one or more distinct subunits have been variously termed ARC, CRSP, DRIP, PC2, SMCC and TRAP (By similarity).</text>
</comment>
<comment type="subcellular location">
    <subcellularLocation>
        <location evidence="2">Nucleus</location>
    </subcellularLocation>
</comment>
<comment type="similarity">
    <text evidence="2">Belongs to the Mediator complex subunit 10 family.</text>
</comment>
<keyword id="KW-0010">Activator</keyword>
<keyword id="KW-0539">Nucleus</keyword>
<keyword id="KW-1185">Reference proteome</keyword>
<keyword id="KW-0804">Transcription</keyword>
<keyword id="KW-0805">Transcription regulation</keyword>
<evidence type="ECO:0000250" key="1"/>
<evidence type="ECO:0000305" key="2"/>
<proteinExistence type="evidence at transcript level"/>
<protein>
    <recommendedName>
        <fullName>Mediator of RNA polymerase II transcription subunit 10</fullName>
    </recommendedName>
    <alternativeName>
        <fullName>Mediator complex subunit 10</fullName>
    </alternativeName>
</protein>
<sequence length="135" mass="15632">MAEKFDHLEEHLEKFVENIRQLGIIVSDFQPSSQAGLNQKLNFIVTGLQDIDKCRQQLHDITVPLEVFEYIDQGRNPQLYTKECLERALAKNEQVKGKIDTMKKFKSLLIQGLSKVFPEDMAKYRSIRGEDHLPS</sequence>
<organism>
    <name type="scientific">Macaca fascicularis</name>
    <name type="common">Crab-eating macaque</name>
    <name type="synonym">Cynomolgus monkey</name>
    <dbReference type="NCBI Taxonomy" id="9541"/>
    <lineage>
        <taxon>Eukaryota</taxon>
        <taxon>Metazoa</taxon>
        <taxon>Chordata</taxon>
        <taxon>Craniata</taxon>
        <taxon>Vertebrata</taxon>
        <taxon>Euteleostomi</taxon>
        <taxon>Mammalia</taxon>
        <taxon>Eutheria</taxon>
        <taxon>Euarchontoglires</taxon>
        <taxon>Primates</taxon>
        <taxon>Haplorrhini</taxon>
        <taxon>Catarrhini</taxon>
        <taxon>Cercopithecidae</taxon>
        <taxon>Cercopithecinae</taxon>
        <taxon>Macaca</taxon>
    </lineage>
</organism>
<reference key="1">
    <citation type="submission" date="2005-06" db="EMBL/GenBank/DDBJ databases">
        <title>DNA sequences of macaque genes expressed in brain or testis and its evolutionary implications.</title>
        <authorList>
            <consortium name="International consortium for macaque cDNA sequencing and analysis"/>
        </authorList>
    </citation>
    <scope>NUCLEOTIDE SEQUENCE [LARGE SCALE MRNA]</scope>
    <source>
        <tissue>Testis</tissue>
    </source>
</reference>
<gene>
    <name type="primary">MED10</name>
    <name type="ORF">QtsA-17005</name>
</gene>
<dbReference type="EMBL" id="AB169066">
    <property type="protein sequence ID" value="BAE01160.1"/>
    <property type="molecule type" value="mRNA"/>
</dbReference>
<dbReference type="RefSeq" id="NP_001271609.1">
    <property type="nucleotide sequence ID" value="NM_001284680.1"/>
</dbReference>
<dbReference type="SMR" id="Q4R6W4"/>
<dbReference type="STRING" id="9541.ENSMFAP00000031514"/>
<dbReference type="eggNOG" id="KOG3046">
    <property type="taxonomic scope" value="Eukaryota"/>
</dbReference>
<dbReference type="Proteomes" id="UP000233100">
    <property type="component" value="Unplaced"/>
</dbReference>
<dbReference type="GO" id="GO:0016592">
    <property type="term" value="C:mediator complex"/>
    <property type="evidence" value="ECO:0007669"/>
    <property type="project" value="InterPro"/>
</dbReference>
<dbReference type="GO" id="GO:0003712">
    <property type="term" value="F:transcription coregulator activity"/>
    <property type="evidence" value="ECO:0007669"/>
    <property type="project" value="InterPro"/>
</dbReference>
<dbReference type="GO" id="GO:0006357">
    <property type="term" value="P:regulation of transcription by RNA polymerase II"/>
    <property type="evidence" value="ECO:0007669"/>
    <property type="project" value="InterPro"/>
</dbReference>
<dbReference type="InterPro" id="IPR019145">
    <property type="entry name" value="Mediator_Med10"/>
</dbReference>
<dbReference type="PANTHER" id="PTHR13345">
    <property type="entry name" value="MEDIATOR OF RNA POLYMERASE II TRANSCRIPTION SUBUNIT 10"/>
    <property type="match status" value="1"/>
</dbReference>
<dbReference type="PANTHER" id="PTHR13345:SF13">
    <property type="entry name" value="MEDIATOR OF RNA POLYMERASE II TRANSCRIPTION SUBUNIT 10"/>
    <property type="match status" value="1"/>
</dbReference>
<dbReference type="Pfam" id="PF09748">
    <property type="entry name" value="Med10"/>
    <property type="match status" value="1"/>
</dbReference>
<name>MED10_MACFA</name>
<accession>Q4R6W4</accession>